<protein>
    <recommendedName>
        <fullName evidence="5">Oxaloacetate tautomerase YcgM</fullName>
        <ecNumber evidence="2">5.3.2.2</ecNumber>
    </recommendedName>
</protein>
<organism>
    <name type="scientific">Escherichia coli (strain K12)</name>
    <dbReference type="NCBI Taxonomy" id="83333"/>
    <lineage>
        <taxon>Bacteria</taxon>
        <taxon>Pseudomonadati</taxon>
        <taxon>Pseudomonadota</taxon>
        <taxon>Gammaproteobacteria</taxon>
        <taxon>Enterobacterales</taxon>
        <taxon>Enterobacteriaceae</taxon>
        <taxon>Escherichia</taxon>
    </lineage>
</organism>
<keyword id="KW-0002">3D-structure</keyword>
<keyword id="KW-0413">Isomerase</keyword>
<keyword id="KW-0479">Metal-binding</keyword>
<keyword id="KW-1185">Reference proteome</keyword>
<feature type="chain" id="PRO_0000156836" description="Oxaloacetate tautomerase YcgM">
    <location>
        <begin position="1"/>
        <end position="219"/>
    </location>
</feature>
<feature type="binding site" evidence="3 6">
    <location>
        <position position="70"/>
    </location>
    <ligand>
        <name>Mg(2+)</name>
        <dbReference type="ChEBI" id="CHEBI:18420"/>
    </ligand>
</feature>
<feature type="binding site" evidence="3 6">
    <location>
        <position position="72"/>
    </location>
    <ligand>
        <name>Mg(2+)</name>
        <dbReference type="ChEBI" id="CHEBI:18420"/>
    </ligand>
</feature>
<feature type="binding site" evidence="3 6">
    <location>
        <position position="101"/>
    </location>
    <ligand>
        <name>Mg(2+)</name>
        <dbReference type="ChEBI" id="CHEBI:18420"/>
    </ligand>
</feature>
<feature type="strand" evidence="7">
    <location>
        <begin position="19"/>
        <end position="23"/>
    </location>
</feature>
<feature type="strand" evidence="7">
    <location>
        <begin position="43"/>
        <end position="46"/>
    </location>
</feature>
<feature type="helix" evidence="7">
    <location>
        <begin position="48"/>
        <end position="50"/>
    </location>
</feature>
<feature type="strand" evidence="7">
    <location>
        <begin position="51"/>
        <end position="53"/>
    </location>
</feature>
<feature type="strand" evidence="7">
    <location>
        <begin position="62"/>
        <end position="65"/>
    </location>
</feature>
<feature type="strand" evidence="7">
    <location>
        <begin position="67"/>
        <end position="69"/>
    </location>
</feature>
<feature type="strand" evidence="7">
    <location>
        <begin position="71"/>
        <end position="77"/>
    </location>
</feature>
<feature type="strand" evidence="7">
    <location>
        <begin position="81"/>
        <end position="83"/>
    </location>
</feature>
<feature type="helix" evidence="7">
    <location>
        <begin position="86"/>
        <end position="92"/>
    </location>
</feature>
<feature type="strand" evidence="7">
    <location>
        <begin position="93"/>
        <end position="100"/>
    </location>
</feature>
<feature type="helix" evidence="7">
    <location>
        <begin position="105"/>
        <end position="114"/>
    </location>
</feature>
<feature type="helix" evidence="7">
    <location>
        <begin position="119"/>
        <end position="122"/>
    </location>
</feature>
<feature type="strand" evidence="7">
    <location>
        <begin position="128"/>
        <end position="130"/>
    </location>
</feature>
<feature type="strand" evidence="7">
    <location>
        <begin position="133"/>
        <end position="135"/>
    </location>
</feature>
<feature type="helix" evidence="7">
    <location>
        <begin position="136"/>
        <end position="138"/>
    </location>
</feature>
<feature type="helix" evidence="7">
    <location>
        <begin position="143"/>
        <end position="145"/>
    </location>
</feature>
<feature type="strand" evidence="7">
    <location>
        <begin position="147"/>
        <end position="152"/>
    </location>
</feature>
<feature type="strand" evidence="7">
    <location>
        <begin position="155"/>
        <end position="161"/>
    </location>
</feature>
<feature type="helix" evidence="7">
    <location>
        <begin position="162"/>
        <end position="164"/>
    </location>
</feature>
<feature type="strand" evidence="7">
    <location>
        <begin position="165"/>
        <end position="167"/>
    </location>
</feature>
<feature type="helix" evidence="7">
    <location>
        <begin position="169"/>
        <end position="176"/>
    </location>
</feature>
<feature type="turn" evidence="7">
    <location>
        <begin position="177"/>
        <end position="179"/>
    </location>
</feature>
<feature type="strand" evidence="7">
    <location>
        <begin position="187"/>
        <end position="189"/>
    </location>
</feature>
<feature type="strand" evidence="7">
    <location>
        <begin position="197"/>
        <end position="199"/>
    </location>
</feature>
<feature type="strand" evidence="7">
    <location>
        <begin position="204"/>
        <end position="209"/>
    </location>
</feature>
<feature type="strand" evidence="7">
    <location>
        <begin position="212"/>
        <end position="218"/>
    </location>
</feature>
<dbReference type="EC" id="5.3.2.2" evidence="2"/>
<dbReference type="EMBL" id="U00096">
    <property type="protein sequence ID" value="AAC74264.1"/>
    <property type="molecule type" value="Genomic_DNA"/>
</dbReference>
<dbReference type="EMBL" id="AP009048">
    <property type="protein sequence ID" value="BAA36014.1"/>
    <property type="molecule type" value="Genomic_DNA"/>
</dbReference>
<dbReference type="PIR" id="A64864">
    <property type="entry name" value="A64864"/>
</dbReference>
<dbReference type="RefSeq" id="NP_415698.1">
    <property type="nucleotide sequence ID" value="NC_000913.3"/>
</dbReference>
<dbReference type="RefSeq" id="WP_000284280.1">
    <property type="nucleotide sequence ID" value="NZ_SSZK01000010.1"/>
</dbReference>
<dbReference type="PDB" id="1NR9">
    <property type="method" value="X-ray"/>
    <property type="resolution" value="2.70 A"/>
    <property type="chains" value="A/B/C/D=1-219"/>
</dbReference>
<dbReference type="PDBsum" id="1NR9"/>
<dbReference type="SMR" id="P76004"/>
<dbReference type="BioGRID" id="4262872">
    <property type="interactions" value="20"/>
</dbReference>
<dbReference type="DIP" id="DIP-11558N"/>
<dbReference type="FunCoup" id="P76004">
    <property type="interactions" value="574"/>
</dbReference>
<dbReference type="IntAct" id="P76004">
    <property type="interactions" value="4"/>
</dbReference>
<dbReference type="STRING" id="511145.b1180"/>
<dbReference type="jPOST" id="P76004"/>
<dbReference type="PaxDb" id="511145-b1180"/>
<dbReference type="EnsemblBacteria" id="AAC74264">
    <property type="protein sequence ID" value="AAC74264"/>
    <property type="gene ID" value="b1180"/>
</dbReference>
<dbReference type="GeneID" id="946115"/>
<dbReference type="KEGG" id="ecj:JW1169"/>
<dbReference type="KEGG" id="eco:b1180"/>
<dbReference type="KEGG" id="ecoc:C3026_06955"/>
<dbReference type="PATRIC" id="fig|1411691.4.peg.1107"/>
<dbReference type="EchoBASE" id="EB3653"/>
<dbReference type="eggNOG" id="COG0179">
    <property type="taxonomic scope" value="Bacteria"/>
</dbReference>
<dbReference type="HOGENOM" id="CLU_028458_5_2_6"/>
<dbReference type="InParanoid" id="P76004"/>
<dbReference type="OMA" id="NCRKVIC"/>
<dbReference type="OrthoDB" id="9805307at2"/>
<dbReference type="PhylomeDB" id="P76004"/>
<dbReference type="BioCyc" id="EcoCyc:G6617-MONOMER"/>
<dbReference type="EvolutionaryTrace" id="P76004"/>
<dbReference type="PRO" id="PR:P76004"/>
<dbReference type="Proteomes" id="UP000000625">
    <property type="component" value="Chromosome"/>
</dbReference>
<dbReference type="GO" id="GO:0018773">
    <property type="term" value="F:acetylpyruvate hydrolase activity"/>
    <property type="evidence" value="ECO:0000318"/>
    <property type="project" value="GO_Central"/>
</dbReference>
<dbReference type="GO" id="GO:0046872">
    <property type="term" value="F:metal ion binding"/>
    <property type="evidence" value="ECO:0007669"/>
    <property type="project" value="UniProtKB-KW"/>
</dbReference>
<dbReference type="GO" id="GO:0050163">
    <property type="term" value="F:oxaloacetate tautomerase activity"/>
    <property type="evidence" value="ECO:0000314"/>
    <property type="project" value="UniProtKB"/>
</dbReference>
<dbReference type="GO" id="GO:0006107">
    <property type="term" value="P:oxaloacetate metabolic process"/>
    <property type="evidence" value="ECO:0000314"/>
    <property type="project" value="UniProtKB"/>
</dbReference>
<dbReference type="FunFam" id="3.90.850.10:FF:000007">
    <property type="entry name" value="Fumarylacetoacetate hydrolase family protein"/>
    <property type="match status" value="1"/>
</dbReference>
<dbReference type="Gene3D" id="3.90.850.10">
    <property type="entry name" value="Fumarylacetoacetase-like, C-terminal domain"/>
    <property type="match status" value="1"/>
</dbReference>
<dbReference type="InterPro" id="IPR011234">
    <property type="entry name" value="Fumarylacetoacetase-like_C"/>
</dbReference>
<dbReference type="InterPro" id="IPR036663">
    <property type="entry name" value="Fumarylacetoacetase_C_sf"/>
</dbReference>
<dbReference type="NCBIfam" id="NF007967">
    <property type="entry name" value="PRK10691.1"/>
    <property type="match status" value="1"/>
</dbReference>
<dbReference type="PANTHER" id="PTHR11820">
    <property type="entry name" value="ACYLPYRUVASE"/>
    <property type="match status" value="1"/>
</dbReference>
<dbReference type="PANTHER" id="PTHR11820:SF7">
    <property type="entry name" value="ACYLPYRUVASE FAHD1, MITOCHONDRIAL"/>
    <property type="match status" value="1"/>
</dbReference>
<dbReference type="Pfam" id="PF01557">
    <property type="entry name" value="FAA_hydrolase"/>
    <property type="match status" value="1"/>
</dbReference>
<dbReference type="SUPFAM" id="SSF56529">
    <property type="entry name" value="FAH"/>
    <property type="match status" value="1"/>
</dbReference>
<accession>P76004</accession>
<name>YCGM_ECOLI</name>
<comment type="function">
    <text evidence="2">Tautomerase that converts enol-oxaloacetate to the keto form of oxaloacetate.</text>
</comment>
<comment type="catalytic activity">
    <reaction evidence="2">
        <text>oxaloacetate = enol-oxaloacetate</text>
        <dbReference type="Rhea" id="RHEA:16021"/>
        <dbReference type="ChEBI" id="CHEBI:16452"/>
        <dbReference type="ChEBI" id="CHEBI:17479"/>
        <dbReference type="EC" id="5.3.2.2"/>
    </reaction>
    <physiologicalReaction direction="right-to-left" evidence="2">
        <dbReference type="Rhea" id="RHEA:16023"/>
    </physiologicalReaction>
</comment>
<comment type="cofactor">
    <cofactor evidence="1">
        <name>a divalent metal cation</name>
        <dbReference type="ChEBI" id="CHEBI:60240"/>
    </cofactor>
</comment>
<comment type="biophysicochemical properties">
    <kinetics>
        <KM evidence="2">26.9 uM for enol-oxaloacetate</KM>
        <Vmax evidence="2">372.0 umol/min/mg enzyme</Vmax>
        <text evidence="2">kcat is 161 sec(-1) with enol-oxaloacetate as substrate.</text>
    </kinetics>
</comment>
<comment type="disruption phenotype">
    <text evidence="2">Metabolic defects, characterized by a significant increase in acetate and other metabolites associated with anaerobic respiration.</text>
</comment>
<comment type="similarity">
    <text evidence="5">Belongs to the FAH family.</text>
</comment>
<gene>
    <name evidence="4" type="primary">ycgM</name>
    <name type="ordered locus">b1180</name>
    <name type="ordered locus">JW1169</name>
</gene>
<reference key="1">
    <citation type="journal article" date="1996" name="DNA Res.">
        <title>A 718-kb DNA sequence of the Escherichia coli K-12 genome corresponding to the 12.7-28.0 min region on the linkage map.</title>
        <authorList>
            <person name="Oshima T."/>
            <person name="Aiba H."/>
            <person name="Baba T."/>
            <person name="Fujita K."/>
            <person name="Hayashi K."/>
            <person name="Honjo A."/>
            <person name="Ikemoto K."/>
            <person name="Inada T."/>
            <person name="Itoh T."/>
            <person name="Kajihara M."/>
            <person name="Kanai K."/>
            <person name="Kashimoto K."/>
            <person name="Kimura S."/>
            <person name="Kitagawa M."/>
            <person name="Makino K."/>
            <person name="Masuda S."/>
            <person name="Miki T."/>
            <person name="Mizobuchi K."/>
            <person name="Mori H."/>
            <person name="Motomura K."/>
            <person name="Nakamura Y."/>
            <person name="Nashimoto H."/>
            <person name="Nishio Y."/>
            <person name="Saito N."/>
            <person name="Sampei G."/>
            <person name="Seki Y."/>
            <person name="Tagami H."/>
            <person name="Takemoto K."/>
            <person name="Wada C."/>
            <person name="Yamamoto Y."/>
            <person name="Yano M."/>
            <person name="Horiuchi T."/>
        </authorList>
    </citation>
    <scope>NUCLEOTIDE SEQUENCE [LARGE SCALE GENOMIC DNA]</scope>
    <source>
        <strain>K12 / W3110 / ATCC 27325 / DSM 5911</strain>
    </source>
</reference>
<reference key="2">
    <citation type="journal article" date="1997" name="Science">
        <title>The complete genome sequence of Escherichia coli K-12.</title>
        <authorList>
            <person name="Blattner F.R."/>
            <person name="Plunkett G. III"/>
            <person name="Bloch C.A."/>
            <person name="Perna N.T."/>
            <person name="Burland V."/>
            <person name="Riley M."/>
            <person name="Collado-Vides J."/>
            <person name="Glasner J.D."/>
            <person name="Rode C.K."/>
            <person name="Mayhew G.F."/>
            <person name="Gregor J."/>
            <person name="Davis N.W."/>
            <person name="Kirkpatrick H.A."/>
            <person name="Goeden M.A."/>
            <person name="Rose D.J."/>
            <person name="Mau B."/>
            <person name="Shao Y."/>
        </authorList>
    </citation>
    <scope>NUCLEOTIDE SEQUENCE [LARGE SCALE GENOMIC DNA]</scope>
    <source>
        <strain>K12 / MG1655 / ATCC 47076</strain>
    </source>
</reference>
<reference key="3">
    <citation type="journal article" date="2006" name="Mol. Syst. Biol.">
        <title>Highly accurate genome sequences of Escherichia coli K-12 strains MG1655 and W3110.</title>
        <authorList>
            <person name="Hayashi K."/>
            <person name="Morooka N."/>
            <person name="Yamamoto Y."/>
            <person name="Fujita K."/>
            <person name="Isono K."/>
            <person name="Choi S."/>
            <person name="Ohtsubo E."/>
            <person name="Baba T."/>
            <person name="Wanner B.L."/>
            <person name="Mori H."/>
            <person name="Horiuchi T."/>
        </authorList>
    </citation>
    <scope>NUCLEOTIDE SEQUENCE [LARGE SCALE GENOMIC DNA]</scope>
    <source>
        <strain>K12 / W3110 / ATCC 27325 / DSM 5911</strain>
    </source>
</reference>
<reference key="4">
    <citation type="journal article" date="2000" name="Eur. J. Biochem.">
        <title>Proteomic analysis of the Escherichia coli outer membrane.</title>
        <authorList>
            <person name="Molloy M.P."/>
            <person name="Herbert B.R."/>
            <person name="Slade M.B."/>
            <person name="Rabilloud T."/>
            <person name="Nouwens A.S."/>
            <person name="Williams K.L."/>
            <person name="Gooley A.A."/>
        </authorList>
    </citation>
    <scope>IDENTIFICATION BY MASS SPECTROMETRY</scope>
</reference>
<reference key="5">
    <citation type="journal article" date="2024" name="Nat. Commun.">
        <title>A universal metabolite repair enzyme removes a strong inhibitor of the TCA cycle.</title>
        <authorList>
            <person name="Zmuda A.J."/>
            <person name="Kang X."/>
            <person name="Wissbroecker K.B."/>
            <person name="Freund Saxhaug K."/>
            <person name="Costa K.C."/>
            <person name="Hegeman A.D."/>
            <person name="Niehaus T.D."/>
        </authorList>
    </citation>
    <scope>FUNCTION</scope>
    <scope>CATALYTIC ACTIVITY</scope>
    <scope>BIOPHYSICOCHEMICAL PROPERTIES</scope>
    <scope>DISRUPTION PHENOTYPE</scope>
</reference>
<reference evidence="6" key="6">
    <citation type="submission" date="2003-01" db="PDB data bank">
        <title>Crystal Structure of Escherichia coli Putative Isomerase EC1262 (APC5008).</title>
        <authorList>
            <person name="Kim Y."/>
            <person name="Joachimiak A."/>
            <person name="Edwards A."/>
            <person name="Skarina T."/>
            <person name="Savchenko A."/>
        </authorList>
    </citation>
    <scope>X-RAY CRYSTALLOGRAPHY (2.70 ANGSTROMS) IN COMPLEX WITH MAGNESIUM</scope>
</reference>
<sequence>MYQHHNWQGALLDYPVSKVVCVGSNYAKHIKEMGSAVPEEPVLFIKPETALCDLRQPLAIPSDFGSVHHEVELAVLIGATLRQATEEHVRKAIAGYGVALDLTLRDVQGKMKKAGQPWEKAKAFDNSCPLSGFIPAAEFTGDPQNTTLSLSVNGEQRQQGTTADMIHKIVPLIAYMSKFFTLKAGDVVLTGTPDGVGPLQSGDELTVTFDGHSLTTRVL</sequence>
<evidence type="ECO:0000250" key="1">
    <source>
        <dbReference type="UniProtKB" id="O06724"/>
    </source>
</evidence>
<evidence type="ECO:0000269" key="2">
    <source>
    </source>
</evidence>
<evidence type="ECO:0000269" key="3">
    <source ref="6"/>
</evidence>
<evidence type="ECO:0000303" key="4">
    <source>
    </source>
</evidence>
<evidence type="ECO:0000305" key="5"/>
<evidence type="ECO:0007744" key="6">
    <source>
        <dbReference type="PDB" id="1NR9"/>
    </source>
</evidence>
<evidence type="ECO:0007829" key="7">
    <source>
        <dbReference type="PDB" id="1NR9"/>
    </source>
</evidence>
<proteinExistence type="evidence at protein level"/>